<organism>
    <name type="scientific">Aquimarina amphilecti</name>
    <dbReference type="NCBI Taxonomy" id="1038014"/>
    <lineage>
        <taxon>Bacteria</taxon>
        <taxon>Pseudomonadati</taxon>
        <taxon>Bacteroidota</taxon>
        <taxon>Flavobacteriia</taxon>
        <taxon>Flavobacteriales</taxon>
        <taxon>Flavobacteriaceae</taxon>
        <taxon>Aquimarina</taxon>
    </lineage>
</organism>
<name>AATIR_AQUAM</name>
<reference evidence="6" key="1">
    <citation type="submission" date="2016-10" db="EMBL/GenBank/DDBJ databases">
        <authorList>
            <person name="Varghese N."/>
        </authorList>
    </citation>
    <scope>NUCLEOTIDE SEQUENCE [LARGE SCALE GENOMIC DNA]</scope>
    <source>
        <strain evidence="6">DSM 25232 / NCIMB 14723 / 92V</strain>
    </source>
</reference>
<reference key="2">
    <citation type="journal article" date="2022" name="Science">
        <title>Cyclic ADP ribose isomers: Production, chemical structures, and immune signaling.</title>
        <authorList>
            <person name="Manik M.K."/>
            <person name="Shi Y."/>
            <person name="Li S."/>
            <person name="Zaydman M.A."/>
            <person name="Damaraju N."/>
            <person name="Eastman S."/>
            <person name="Smith T.G."/>
            <person name="Gu W."/>
            <person name="Masic V."/>
            <person name="Mosaiab T."/>
            <person name="Weagley J.S."/>
            <person name="Hancock S.J."/>
            <person name="Vasquez E."/>
            <person name="Hartley-Tassell L."/>
            <person name="Kargios N."/>
            <person name="Maruta N."/>
            <person name="Lim B.Y.J."/>
            <person name="Burdett H."/>
            <person name="Landsberg M.J."/>
            <person name="Schembri M.A."/>
            <person name="Prokes I."/>
            <person name="Song L."/>
            <person name="Grant M."/>
            <person name="DiAntonio A."/>
            <person name="Nanson J.D."/>
            <person name="Guo M."/>
            <person name="Milbrandt J."/>
            <person name="Ve T."/>
            <person name="Kobe B."/>
        </authorList>
    </citation>
    <scope>FUNCTION</scope>
    <scope>CATALYTIC ACTIVITY</scope>
    <scope>DOMAIN</scope>
</reference>
<protein>
    <recommendedName>
        <fullName evidence="4">3' cyclic ADP-D-ribose synthase AaTIR</fullName>
        <shortName evidence="4">3'cADPR synthase AaTIR</shortName>
        <ecNumber evidence="2">3.2.2.-</ecNumber>
    </recommendedName>
    <alternativeName>
        <fullName>NAD(+) hydrolase AaTIR</fullName>
        <shortName evidence="3">AaTir</shortName>
    </alternativeName>
</protein>
<dbReference type="EC" id="3.2.2.-" evidence="2"/>
<dbReference type="EMBL" id="FOAB01000008">
    <property type="protein sequence ID" value="SEM07887.1"/>
    <property type="molecule type" value="Genomic_DNA"/>
</dbReference>
<dbReference type="RefSeq" id="WP_091411838.1">
    <property type="nucleotide sequence ID" value="NZ_FOAB01000008.1"/>
</dbReference>
<dbReference type="SMR" id="A0A1H7VGH3"/>
<dbReference type="STRING" id="1038014.SAMN04487910_4078"/>
<dbReference type="OrthoDB" id="583767at2"/>
<dbReference type="Proteomes" id="UP000198521">
    <property type="component" value="Unassembled WGS sequence"/>
</dbReference>
<dbReference type="GO" id="GO:0016787">
    <property type="term" value="F:hydrolase activity"/>
    <property type="evidence" value="ECO:0007669"/>
    <property type="project" value="UniProtKB-KW"/>
</dbReference>
<dbReference type="GO" id="GO:0007165">
    <property type="term" value="P:signal transduction"/>
    <property type="evidence" value="ECO:0007669"/>
    <property type="project" value="InterPro"/>
</dbReference>
<dbReference type="Gene3D" id="3.40.50.10140">
    <property type="entry name" value="Toll/interleukin-1 receptor homology (TIR) domain"/>
    <property type="match status" value="1"/>
</dbReference>
<dbReference type="InterPro" id="IPR000157">
    <property type="entry name" value="TIR_dom"/>
</dbReference>
<dbReference type="InterPro" id="IPR035897">
    <property type="entry name" value="Toll_tir_struct_dom_sf"/>
</dbReference>
<dbReference type="Pfam" id="PF13676">
    <property type="entry name" value="TIR_2"/>
    <property type="match status" value="1"/>
</dbReference>
<dbReference type="SMART" id="SM00255">
    <property type="entry name" value="TIR"/>
    <property type="match status" value="1"/>
</dbReference>
<dbReference type="SUPFAM" id="SSF52200">
    <property type="entry name" value="Toll/Interleukin receptor TIR domain"/>
    <property type="match status" value="1"/>
</dbReference>
<gene>
    <name evidence="6" type="ORF">SAMN04487910_4078</name>
</gene>
<keyword id="KW-0378">Hydrolase</keyword>
<keyword id="KW-0520">NAD</keyword>
<keyword id="KW-1185">Reference proteome</keyword>
<accession>A0A1H7VGH3</accession>
<sequence length="327" mass="37757">MKNRSYEYDVALSFAGENRAYVERVANSLKTKGVKVFYDLFEEANLWGKNLYEYLSEIYQNKARYTVLFVSSFYNKKLWTNHERVSMQARAFQESREYILPARFDDTEIPGILKTIGYINLENRTPEELAVLIENKLKKDQTFFKNRWSKLSTMISPKPFIFTIKVVDEKSQLVKHAKVVLVANNSTYLEGYTDENGLAHFVIRTRKLYTVLIAHSEYPAVVFKSMNPKEDIEVTIEKTNNSGSVIINKSGQIPGISGKIEPVLKSDKNLSVYADNIAIEGGKDQPYDFELNKSIVLEDNKGNIVHLTFRFYQARIALIDFYRGRSM</sequence>
<comment type="function">
    <text evidence="2">NAD(+) hydrolase (NADase) that generates 3'cADPR, a cyclization variant of cyclic ADP-D-ribose (also called v2-cADPR). Also cleaves NADP(+), but does not cyclize the product.</text>
</comment>
<comment type="catalytic activity">
    <reaction evidence="2">
        <text>NADP(+) + H2O = ADP-D-ribose 2'-phosphate + nicotinamide + H(+)</text>
        <dbReference type="Rhea" id="RHEA:19849"/>
        <dbReference type="ChEBI" id="CHEBI:15377"/>
        <dbReference type="ChEBI" id="CHEBI:15378"/>
        <dbReference type="ChEBI" id="CHEBI:17154"/>
        <dbReference type="ChEBI" id="CHEBI:58349"/>
        <dbReference type="ChEBI" id="CHEBI:58673"/>
    </reaction>
    <physiologicalReaction direction="left-to-right" evidence="2">
        <dbReference type="Rhea" id="RHEA:19850"/>
    </physiologicalReaction>
</comment>
<comment type="catalytic activity">
    <reaction evidence="2">
        <text>NAD(+) = 3'cADPR + nicotinamide + H(+)</text>
        <dbReference type="Rhea" id="RHEA:75303"/>
        <dbReference type="ChEBI" id="CHEBI:15378"/>
        <dbReference type="ChEBI" id="CHEBI:17154"/>
        <dbReference type="ChEBI" id="CHEBI:57540"/>
        <dbReference type="ChEBI" id="CHEBI:194249"/>
    </reaction>
    <physiologicalReaction direction="left-to-right" evidence="2">
        <dbReference type="Rhea" id="RHEA:75304"/>
    </physiologicalReaction>
</comment>
<comment type="subunit">
    <text evidence="1">Homodimer.</text>
</comment>
<comment type="domain">
    <text evidence="2">The TIR domain alone is active and produces cADPR.</text>
</comment>
<proteinExistence type="evidence at protein level"/>
<evidence type="ECO:0000250" key="1">
    <source>
        <dbReference type="UniProtKB" id="A0A009IHW8"/>
    </source>
</evidence>
<evidence type="ECO:0000269" key="2">
    <source>
    </source>
</evidence>
<evidence type="ECO:0000303" key="3">
    <source>
    </source>
</evidence>
<evidence type="ECO:0000305" key="4"/>
<evidence type="ECO:0000305" key="5">
    <source>
    </source>
</evidence>
<evidence type="ECO:0000312" key="6">
    <source>
        <dbReference type="EMBL" id="SEM07887.1"/>
    </source>
</evidence>
<feature type="chain" id="PRO_0000457981" description="3' cyclic ADP-D-ribose synthase AaTIR">
    <location>
        <begin position="1"/>
        <end position="327"/>
    </location>
</feature>
<feature type="region of interest" description="TIR domain" evidence="2">
    <location>
        <begin position="10"/>
        <end position="120"/>
    </location>
</feature>
<feature type="active site" evidence="1">
    <location>
        <position position="229"/>
    </location>
</feature>
<feature type="site" description="Important for ADPR cyclization" evidence="5">
    <location>
        <position position="218"/>
    </location>
</feature>